<evidence type="ECO:0000255" key="1">
    <source>
        <dbReference type="HAMAP-Rule" id="MF_01364"/>
    </source>
</evidence>
<evidence type="ECO:0000305" key="2"/>
<accession>B0RZS2</accession>
<dbReference type="EMBL" id="AP008971">
    <property type="protein sequence ID" value="BAG07586.1"/>
    <property type="molecule type" value="Genomic_DNA"/>
</dbReference>
<dbReference type="RefSeq" id="WP_002836123.1">
    <property type="nucleotide sequence ID" value="NC_010376.1"/>
</dbReference>
<dbReference type="SMR" id="B0RZS2"/>
<dbReference type="STRING" id="334413.FMG_0168"/>
<dbReference type="KEGG" id="fma:FMG_0168"/>
<dbReference type="eggNOG" id="COG0199">
    <property type="taxonomic scope" value="Bacteria"/>
</dbReference>
<dbReference type="HOGENOM" id="CLU_139869_3_0_9"/>
<dbReference type="Proteomes" id="UP000001319">
    <property type="component" value="Chromosome"/>
</dbReference>
<dbReference type="GO" id="GO:0005737">
    <property type="term" value="C:cytoplasm"/>
    <property type="evidence" value="ECO:0007669"/>
    <property type="project" value="UniProtKB-ARBA"/>
</dbReference>
<dbReference type="GO" id="GO:0015935">
    <property type="term" value="C:small ribosomal subunit"/>
    <property type="evidence" value="ECO:0007669"/>
    <property type="project" value="TreeGrafter"/>
</dbReference>
<dbReference type="GO" id="GO:0019843">
    <property type="term" value="F:rRNA binding"/>
    <property type="evidence" value="ECO:0007669"/>
    <property type="project" value="UniProtKB-UniRule"/>
</dbReference>
<dbReference type="GO" id="GO:0003735">
    <property type="term" value="F:structural constituent of ribosome"/>
    <property type="evidence" value="ECO:0007669"/>
    <property type="project" value="InterPro"/>
</dbReference>
<dbReference type="GO" id="GO:0008270">
    <property type="term" value="F:zinc ion binding"/>
    <property type="evidence" value="ECO:0007669"/>
    <property type="project" value="UniProtKB-UniRule"/>
</dbReference>
<dbReference type="GO" id="GO:0006412">
    <property type="term" value="P:translation"/>
    <property type="evidence" value="ECO:0007669"/>
    <property type="project" value="UniProtKB-UniRule"/>
</dbReference>
<dbReference type="FunFam" id="4.10.830.10:FF:000001">
    <property type="entry name" value="30S ribosomal protein S14 type Z"/>
    <property type="match status" value="1"/>
</dbReference>
<dbReference type="Gene3D" id="4.10.830.10">
    <property type="entry name" value="30s Ribosomal Protein S14, Chain N"/>
    <property type="match status" value="1"/>
</dbReference>
<dbReference type="HAMAP" id="MF_01364_B">
    <property type="entry name" value="Ribosomal_uS14_2_B"/>
    <property type="match status" value="1"/>
</dbReference>
<dbReference type="InterPro" id="IPR001209">
    <property type="entry name" value="Ribosomal_uS14"/>
</dbReference>
<dbReference type="InterPro" id="IPR023053">
    <property type="entry name" value="Ribosomal_uS14_bact"/>
</dbReference>
<dbReference type="InterPro" id="IPR043140">
    <property type="entry name" value="Ribosomal_uS14_sf"/>
</dbReference>
<dbReference type="NCBIfam" id="NF005974">
    <property type="entry name" value="PRK08061.1"/>
    <property type="match status" value="1"/>
</dbReference>
<dbReference type="PANTHER" id="PTHR19836">
    <property type="entry name" value="30S RIBOSOMAL PROTEIN S14"/>
    <property type="match status" value="1"/>
</dbReference>
<dbReference type="PANTHER" id="PTHR19836:SF19">
    <property type="entry name" value="SMALL RIBOSOMAL SUBUNIT PROTEIN US14M"/>
    <property type="match status" value="1"/>
</dbReference>
<dbReference type="Pfam" id="PF00253">
    <property type="entry name" value="Ribosomal_S14"/>
    <property type="match status" value="1"/>
</dbReference>
<dbReference type="SUPFAM" id="SSF57716">
    <property type="entry name" value="Glucocorticoid receptor-like (DNA-binding domain)"/>
    <property type="match status" value="1"/>
</dbReference>
<protein>
    <recommendedName>
        <fullName evidence="1">Small ribosomal subunit protein uS14</fullName>
    </recommendedName>
    <alternativeName>
        <fullName evidence="2">30S ribosomal protein S14 type Z</fullName>
    </alternativeName>
</protein>
<feature type="chain" id="PRO_1000143902" description="Small ribosomal subunit protein uS14">
    <location>
        <begin position="1"/>
        <end position="61"/>
    </location>
</feature>
<feature type="binding site" evidence="1">
    <location>
        <position position="24"/>
    </location>
    <ligand>
        <name>Zn(2+)</name>
        <dbReference type="ChEBI" id="CHEBI:29105"/>
    </ligand>
</feature>
<feature type="binding site" evidence="1">
    <location>
        <position position="27"/>
    </location>
    <ligand>
        <name>Zn(2+)</name>
        <dbReference type="ChEBI" id="CHEBI:29105"/>
    </ligand>
</feature>
<feature type="binding site" evidence="1">
    <location>
        <position position="40"/>
    </location>
    <ligand>
        <name>Zn(2+)</name>
        <dbReference type="ChEBI" id="CHEBI:29105"/>
    </ligand>
</feature>
<feature type="binding site" evidence="1">
    <location>
        <position position="43"/>
    </location>
    <ligand>
        <name>Zn(2+)</name>
        <dbReference type="ChEBI" id="CHEBI:29105"/>
    </ligand>
</feature>
<sequence>MAKKSMIAKQKRPAKFSTREYNRCKICGRPHGYLKKYGICRICFRELAYKGEIPGVRKASW</sequence>
<reference key="1">
    <citation type="journal article" date="2008" name="DNA Res.">
        <title>Complete genome sequence of Finegoldia magna, an anaerobic opportunistic pathogen.</title>
        <authorList>
            <person name="Goto T."/>
            <person name="Yamashita A."/>
            <person name="Hirakawa H."/>
            <person name="Matsutani M."/>
            <person name="Todo K."/>
            <person name="Ohshima K."/>
            <person name="Toh H."/>
            <person name="Miyamoto K."/>
            <person name="Kuhara S."/>
            <person name="Hattori M."/>
            <person name="Shimizu T."/>
            <person name="Akimoto S."/>
        </authorList>
    </citation>
    <scope>NUCLEOTIDE SEQUENCE [LARGE SCALE GENOMIC DNA]</scope>
    <source>
        <strain>ATCC 29328 / DSM 20472 / WAL 2508</strain>
    </source>
</reference>
<name>RS14Z_FINM2</name>
<gene>
    <name evidence="1" type="primary">rpsZ</name>
    <name evidence="1" type="synonym">rpsN</name>
    <name type="ordered locus">FMG_0168</name>
</gene>
<comment type="function">
    <text evidence="1">Binds 16S rRNA, required for the assembly of 30S particles and may also be responsible for determining the conformation of the 16S rRNA at the A site.</text>
</comment>
<comment type="cofactor">
    <cofactor evidence="1">
        <name>Zn(2+)</name>
        <dbReference type="ChEBI" id="CHEBI:29105"/>
    </cofactor>
    <text evidence="1">Binds 1 zinc ion per subunit.</text>
</comment>
<comment type="subunit">
    <text evidence="1">Part of the 30S ribosomal subunit. Contacts proteins S3 and S10.</text>
</comment>
<comment type="similarity">
    <text evidence="1">Belongs to the universal ribosomal protein uS14 family. Zinc-binding uS14 subfamily.</text>
</comment>
<proteinExistence type="inferred from homology"/>
<organism>
    <name type="scientific">Finegoldia magna (strain ATCC 29328 / DSM 20472 / WAL 2508)</name>
    <name type="common">Peptostreptococcus magnus</name>
    <dbReference type="NCBI Taxonomy" id="334413"/>
    <lineage>
        <taxon>Bacteria</taxon>
        <taxon>Bacillati</taxon>
        <taxon>Bacillota</taxon>
        <taxon>Tissierellia</taxon>
        <taxon>Tissierellales</taxon>
        <taxon>Peptoniphilaceae</taxon>
        <taxon>Finegoldia</taxon>
    </lineage>
</organism>
<keyword id="KW-0479">Metal-binding</keyword>
<keyword id="KW-1185">Reference proteome</keyword>
<keyword id="KW-0687">Ribonucleoprotein</keyword>
<keyword id="KW-0689">Ribosomal protein</keyword>
<keyword id="KW-0694">RNA-binding</keyword>
<keyword id="KW-0699">rRNA-binding</keyword>
<keyword id="KW-0862">Zinc</keyword>